<organism>
    <name type="scientific">Bacillus subtilis (strain 168)</name>
    <dbReference type="NCBI Taxonomy" id="224308"/>
    <lineage>
        <taxon>Bacteria</taxon>
        <taxon>Bacillati</taxon>
        <taxon>Bacillota</taxon>
        <taxon>Bacilli</taxon>
        <taxon>Bacillales</taxon>
        <taxon>Bacillaceae</taxon>
        <taxon>Bacillus</taxon>
    </lineage>
</organism>
<sequence length="157" mass="18374">MAFTLEDMTEEEFEAFRGMSVQNFAKQNITSGTWTEKEAFEKSEQAYENMIPNGRDSSNHYFWNITNDQGERMGWLWLYADPLHPQKEAFIYSFGLYEAFRGKGLAQLALQTLDERARELGAERLALHVFAHNETAVYLYQKMGYAMTNIRMRKQLC</sequence>
<protein>
    <recommendedName>
        <fullName>Uncharacterized N-acetyltransferase YdgE</fullName>
        <ecNumber>2.3.1.-</ecNumber>
    </recommendedName>
</protein>
<reference key="1">
    <citation type="submission" date="1997-03" db="EMBL/GenBank/DDBJ databases">
        <title>A 148 kbp sequence of the region between 35 and 47 degree of the Bacillus subtilis genome.</title>
        <authorList>
            <person name="Kasahara Y."/>
            <person name="Nakai S."/>
            <person name="Lee S."/>
            <person name="Sadaie Y."/>
            <person name="Ogasawara N."/>
        </authorList>
    </citation>
    <scope>NUCLEOTIDE SEQUENCE [GENOMIC DNA]</scope>
    <source>
        <strain>168</strain>
    </source>
</reference>
<reference key="2">
    <citation type="journal article" date="1997" name="Nature">
        <title>The complete genome sequence of the Gram-positive bacterium Bacillus subtilis.</title>
        <authorList>
            <person name="Kunst F."/>
            <person name="Ogasawara N."/>
            <person name="Moszer I."/>
            <person name="Albertini A.M."/>
            <person name="Alloni G."/>
            <person name="Azevedo V."/>
            <person name="Bertero M.G."/>
            <person name="Bessieres P."/>
            <person name="Bolotin A."/>
            <person name="Borchert S."/>
            <person name="Borriss R."/>
            <person name="Boursier L."/>
            <person name="Brans A."/>
            <person name="Braun M."/>
            <person name="Brignell S.C."/>
            <person name="Bron S."/>
            <person name="Brouillet S."/>
            <person name="Bruschi C.V."/>
            <person name="Caldwell B."/>
            <person name="Capuano V."/>
            <person name="Carter N.M."/>
            <person name="Choi S.-K."/>
            <person name="Codani J.-J."/>
            <person name="Connerton I.F."/>
            <person name="Cummings N.J."/>
            <person name="Daniel R.A."/>
            <person name="Denizot F."/>
            <person name="Devine K.M."/>
            <person name="Duesterhoeft A."/>
            <person name="Ehrlich S.D."/>
            <person name="Emmerson P.T."/>
            <person name="Entian K.-D."/>
            <person name="Errington J."/>
            <person name="Fabret C."/>
            <person name="Ferrari E."/>
            <person name="Foulger D."/>
            <person name="Fritz C."/>
            <person name="Fujita M."/>
            <person name="Fujita Y."/>
            <person name="Fuma S."/>
            <person name="Galizzi A."/>
            <person name="Galleron N."/>
            <person name="Ghim S.-Y."/>
            <person name="Glaser P."/>
            <person name="Goffeau A."/>
            <person name="Golightly E.J."/>
            <person name="Grandi G."/>
            <person name="Guiseppi G."/>
            <person name="Guy B.J."/>
            <person name="Haga K."/>
            <person name="Haiech J."/>
            <person name="Harwood C.R."/>
            <person name="Henaut A."/>
            <person name="Hilbert H."/>
            <person name="Holsappel S."/>
            <person name="Hosono S."/>
            <person name="Hullo M.-F."/>
            <person name="Itaya M."/>
            <person name="Jones L.-M."/>
            <person name="Joris B."/>
            <person name="Karamata D."/>
            <person name="Kasahara Y."/>
            <person name="Klaerr-Blanchard M."/>
            <person name="Klein C."/>
            <person name="Kobayashi Y."/>
            <person name="Koetter P."/>
            <person name="Koningstein G."/>
            <person name="Krogh S."/>
            <person name="Kumano M."/>
            <person name="Kurita K."/>
            <person name="Lapidus A."/>
            <person name="Lardinois S."/>
            <person name="Lauber J."/>
            <person name="Lazarevic V."/>
            <person name="Lee S.-M."/>
            <person name="Levine A."/>
            <person name="Liu H."/>
            <person name="Masuda S."/>
            <person name="Mauel C."/>
            <person name="Medigue C."/>
            <person name="Medina N."/>
            <person name="Mellado R.P."/>
            <person name="Mizuno M."/>
            <person name="Moestl D."/>
            <person name="Nakai S."/>
            <person name="Noback M."/>
            <person name="Noone D."/>
            <person name="O'Reilly M."/>
            <person name="Ogawa K."/>
            <person name="Ogiwara A."/>
            <person name="Oudega B."/>
            <person name="Park S.-H."/>
            <person name="Parro V."/>
            <person name="Pohl T.M."/>
            <person name="Portetelle D."/>
            <person name="Porwollik S."/>
            <person name="Prescott A.M."/>
            <person name="Presecan E."/>
            <person name="Pujic P."/>
            <person name="Purnelle B."/>
            <person name="Rapoport G."/>
            <person name="Rey M."/>
            <person name="Reynolds S."/>
            <person name="Rieger M."/>
            <person name="Rivolta C."/>
            <person name="Rocha E."/>
            <person name="Roche B."/>
            <person name="Rose M."/>
            <person name="Sadaie Y."/>
            <person name="Sato T."/>
            <person name="Scanlan E."/>
            <person name="Schleich S."/>
            <person name="Schroeter R."/>
            <person name="Scoffone F."/>
            <person name="Sekiguchi J."/>
            <person name="Sekowska A."/>
            <person name="Seror S.J."/>
            <person name="Serror P."/>
            <person name="Shin B.-S."/>
            <person name="Soldo B."/>
            <person name="Sorokin A."/>
            <person name="Tacconi E."/>
            <person name="Takagi T."/>
            <person name="Takahashi H."/>
            <person name="Takemaru K."/>
            <person name="Takeuchi M."/>
            <person name="Tamakoshi A."/>
            <person name="Tanaka T."/>
            <person name="Terpstra P."/>
            <person name="Tognoni A."/>
            <person name="Tosato V."/>
            <person name="Uchiyama S."/>
            <person name="Vandenbol M."/>
            <person name="Vannier F."/>
            <person name="Vassarotti A."/>
            <person name="Viari A."/>
            <person name="Wambutt R."/>
            <person name="Wedler E."/>
            <person name="Wedler H."/>
            <person name="Weitzenegger T."/>
            <person name="Winters P."/>
            <person name="Wipat A."/>
            <person name="Yamamoto H."/>
            <person name="Yamane K."/>
            <person name="Yasumoto K."/>
            <person name="Yata K."/>
            <person name="Yoshida K."/>
            <person name="Yoshikawa H.-F."/>
            <person name="Zumstein E."/>
            <person name="Yoshikawa H."/>
            <person name="Danchin A."/>
        </authorList>
    </citation>
    <scope>NUCLEOTIDE SEQUENCE [LARGE SCALE GENOMIC DNA]</scope>
    <source>
        <strain>168</strain>
    </source>
</reference>
<accession>P96703</accession>
<accession>Q797F3</accession>
<comment type="similarity">
    <text evidence="2">Belongs to the acetyltransferase family.</text>
</comment>
<feature type="chain" id="PRO_0000359968" description="Uncharacterized N-acetyltransferase YdgE">
    <location>
        <begin position="1"/>
        <end position="157"/>
    </location>
</feature>
<feature type="domain" description="N-acetyltransferase" evidence="1">
    <location>
        <begin position="3"/>
        <end position="157"/>
    </location>
</feature>
<dbReference type="EC" id="2.3.1.-"/>
<dbReference type="EMBL" id="AB001488">
    <property type="protein sequence ID" value="BAA19393.1"/>
    <property type="molecule type" value="Genomic_DNA"/>
</dbReference>
<dbReference type="EMBL" id="AL009126">
    <property type="protein sequence ID" value="CAB12367.1"/>
    <property type="molecule type" value="Genomic_DNA"/>
</dbReference>
<dbReference type="PIR" id="G69782">
    <property type="entry name" value="G69782"/>
</dbReference>
<dbReference type="RefSeq" id="NP_388441.1">
    <property type="nucleotide sequence ID" value="NC_000964.3"/>
</dbReference>
<dbReference type="RefSeq" id="WP_003234145.1">
    <property type="nucleotide sequence ID" value="NZ_OZ025638.1"/>
</dbReference>
<dbReference type="SMR" id="P96703"/>
<dbReference type="FunCoup" id="P96703">
    <property type="interactions" value="14"/>
</dbReference>
<dbReference type="STRING" id="224308.BSU05600"/>
<dbReference type="PaxDb" id="224308-BSU05600"/>
<dbReference type="EnsemblBacteria" id="CAB12367">
    <property type="protein sequence ID" value="CAB12367"/>
    <property type="gene ID" value="BSU_05600"/>
</dbReference>
<dbReference type="GeneID" id="939907"/>
<dbReference type="KEGG" id="bsu:BSU05600"/>
<dbReference type="PATRIC" id="fig|224308.179.peg.602"/>
<dbReference type="eggNOG" id="COG0456">
    <property type="taxonomic scope" value="Bacteria"/>
</dbReference>
<dbReference type="InParanoid" id="P96703"/>
<dbReference type="OrthoDB" id="65897at2"/>
<dbReference type="PhylomeDB" id="P96703"/>
<dbReference type="BioCyc" id="BSUB:BSU05600-MONOMER"/>
<dbReference type="Proteomes" id="UP000001570">
    <property type="component" value="Chromosome"/>
</dbReference>
<dbReference type="GO" id="GO:0016747">
    <property type="term" value="F:acyltransferase activity, transferring groups other than amino-acyl groups"/>
    <property type="evidence" value="ECO:0007669"/>
    <property type="project" value="InterPro"/>
</dbReference>
<dbReference type="CDD" id="cd04301">
    <property type="entry name" value="NAT_SF"/>
    <property type="match status" value="1"/>
</dbReference>
<dbReference type="Gene3D" id="3.40.630.30">
    <property type="match status" value="1"/>
</dbReference>
<dbReference type="InterPro" id="IPR016181">
    <property type="entry name" value="Acyl_CoA_acyltransferase"/>
</dbReference>
<dbReference type="InterPro" id="IPR000182">
    <property type="entry name" value="GNAT_dom"/>
</dbReference>
<dbReference type="InterPro" id="IPR052829">
    <property type="entry name" value="N-acetyltransferase_domain"/>
</dbReference>
<dbReference type="PANTHER" id="PTHR43259:SF1">
    <property type="entry name" value="N-ACETYLTRANSFERASE DOMAIN-CONTAINING PROTEIN"/>
    <property type="match status" value="1"/>
</dbReference>
<dbReference type="PANTHER" id="PTHR43259">
    <property type="entry name" value="SPT10P"/>
    <property type="match status" value="1"/>
</dbReference>
<dbReference type="Pfam" id="PF00583">
    <property type="entry name" value="Acetyltransf_1"/>
    <property type="match status" value="1"/>
</dbReference>
<dbReference type="SUPFAM" id="SSF55729">
    <property type="entry name" value="Acyl-CoA N-acyltransferases (Nat)"/>
    <property type="match status" value="1"/>
</dbReference>
<dbReference type="PROSITE" id="PS51186">
    <property type="entry name" value="GNAT"/>
    <property type="match status" value="1"/>
</dbReference>
<evidence type="ECO:0000255" key="1">
    <source>
        <dbReference type="PROSITE-ProRule" id="PRU00532"/>
    </source>
</evidence>
<evidence type="ECO:0000305" key="2"/>
<keyword id="KW-0012">Acyltransferase</keyword>
<keyword id="KW-1185">Reference proteome</keyword>
<keyword id="KW-0808">Transferase</keyword>
<proteinExistence type="inferred from homology"/>
<gene>
    <name type="primary">ydgE</name>
    <name type="ordered locus">BSU05600</name>
</gene>
<name>YDGE_BACSU</name>